<organism>
    <name type="scientific">Brucella melitensis biotype 1 (strain ATCC 23456 / CCUG 17765 / NCTC 10094 / 16M)</name>
    <dbReference type="NCBI Taxonomy" id="224914"/>
    <lineage>
        <taxon>Bacteria</taxon>
        <taxon>Pseudomonadati</taxon>
        <taxon>Pseudomonadota</taxon>
        <taxon>Alphaproteobacteria</taxon>
        <taxon>Hyphomicrobiales</taxon>
        <taxon>Brucellaceae</taxon>
        <taxon>Brucella/Ochrobactrum group</taxon>
        <taxon>Brucella</taxon>
    </lineage>
</organism>
<evidence type="ECO:0000255" key="1">
    <source>
        <dbReference type="HAMAP-Rule" id="MF_00436"/>
    </source>
</evidence>
<evidence type="ECO:0000255" key="2">
    <source>
        <dbReference type="PROSITE-ProRule" id="PRU01346"/>
    </source>
</evidence>
<feature type="chain" id="PRO_0000095629" description="RNA-binding protein Hfq">
    <location>
        <begin position="1"/>
        <end position="78"/>
    </location>
</feature>
<feature type="domain" description="Sm" evidence="2">
    <location>
        <begin position="10"/>
        <end position="70"/>
    </location>
</feature>
<keyword id="KW-0694">RNA-binding</keyword>
<keyword id="KW-0346">Stress response</keyword>
<dbReference type="EMBL" id="AE008917">
    <property type="protein sequence ID" value="AAL52053.1"/>
    <property type="molecule type" value="Genomic_DNA"/>
</dbReference>
<dbReference type="PIR" id="AB3361">
    <property type="entry name" value="AB3361"/>
</dbReference>
<dbReference type="RefSeq" id="WP_002964239.1">
    <property type="nucleotide sequence ID" value="NZ_GG703780.1"/>
</dbReference>
<dbReference type="SMR" id="P0A3G7"/>
<dbReference type="GeneID" id="97533634"/>
<dbReference type="KEGG" id="bme:BMEI0872"/>
<dbReference type="KEGG" id="bmel:DK63_550"/>
<dbReference type="PATRIC" id="fig|224914.52.peg.572"/>
<dbReference type="eggNOG" id="COG1923">
    <property type="taxonomic scope" value="Bacteria"/>
</dbReference>
<dbReference type="Proteomes" id="UP000000419">
    <property type="component" value="Chromosome I"/>
</dbReference>
<dbReference type="GO" id="GO:0005829">
    <property type="term" value="C:cytosol"/>
    <property type="evidence" value="ECO:0007669"/>
    <property type="project" value="TreeGrafter"/>
</dbReference>
<dbReference type="GO" id="GO:0003723">
    <property type="term" value="F:RNA binding"/>
    <property type="evidence" value="ECO:0007669"/>
    <property type="project" value="UniProtKB-UniRule"/>
</dbReference>
<dbReference type="GO" id="GO:0006355">
    <property type="term" value="P:regulation of DNA-templated transcription"/>
    <property type="evidence" value="ECO:0007669"/>
    <property type="project" value="InterPro"/>
</dbReference>
<dbReference type="GO" id="GO:0043487">
    <property type="term" value="P:regulation of RNA stability"/>
    <property type="evidence" value="ECO:0007669"/>
    <property type="project" value="TreeGrafter"/>
</dbReference>
<dbReference type="GO" id="GO:0045974">
    <property type="term" value="P:regulation of translation, ncRNA-mediated"/>
    <property type="evidence" value="ECO:0007669"/>
    <property type="project" value="TreeGrafter"/>
</dbReference>
<dbReference type="CDD" id="cd01716">
    <property type="entry name" value="Hfq"/>
    <property type="match status" value="1"/>
</dbReference>
<dbReference type="Gene3D" id="2.30.30.100">
    <property type="match status" value="1"/>
</dbReference>
<dbReference type="HAMAP" id="MF_00436">
    <property type="entry name" value="Hfq"/>
    <property type="match status" value="1"/>
</dbReference>
<dbReference type="InterPro" id="IPR005001">
    <property type="entry name" value="Hfq"/>
</dbReference>
<dbReference type="InterPro" id="IPR010920">
    <property type="entry name" value="LSM_dom_sf"/>
</dbReference>
<dbReference type="InterPro" id="IPR047575">
    <property type="entry name" value="Sm"/>
</dbReference>
<dbReference type="NCBIfam" id="TIGR02383">
    <property type="entry name" value="Hfq"/>
    <property type="match status" value="1"/>
</dbReference>
<dbReference type="NCBIfam" id="NF001602">
    <property type="entry name" value="PRK00395.1"/>
    <property type="match status" value="1"/>
</dbReference>
<dbReference type="PANTHER" id="PTHR34772">
    <property type="entry name" value="RNA-BINDING PROTEIN HFQ"/>
    <property type="match status" value="1"/>
</dbReference>
<dbReference type="PANTHER" id="PTHR34772:SF1">
    <property type="entry name" value="RNA-BINDING PROTEIN HFQ"/>
    <property type="match status" value="1"/>
</dbReference>
<dbReference type="Pfam" id="PF17209">
    <property type="entry name" value="Hfq"/>
    <property type="match status" value="1"/>
</dbReference>
<dbReference type="SUPFAM" id="SSF50182">
    <property type="entry name" value="Sm-like ribonucleoproteins"/>
    <property type="match status" value="1"/>
</dbReference>
<dbReference type="PROSITE" id="PS52002">
    <property type="entry name" value="SM"/>
    <property type="match status" value="1"/>
</dbReference>
<gene>
    <name evidence="1" type="primary">hfq</name>
    <name type="ordered locus">BMEI0872</name>
</gene>
<comment type="function">
    <text evidence="1">RNA chaperone that binds small regulatory RNA (sRNAs) and mRNAs to facilitate mRNA translational regulation in response to envelope stress, environmental stress and changes in metabolite concentrations. Also binds with high specificity to tRNAs.</text>
</comment>
<comment type="subunit">
    <text evidence="1">Homohexamer.</text>
</comment>
<comment type="similarity">
    <text evidence="1">Belongs to the Hfq family.</text>
</comment>
<accession>P0A3G7</accession>
<accession>Q9XBW1</accession>
<proteinExistence type="inferred from homology"/>
<sequence length="78" mass="8854">MAERSQNLQDLFLNSVRKQKISLTIFLINGVKLTGIVTSFDNFCVLLRRDGHSQLVYKHAISTIMPSQPVQMFEGEEA</sequence>
<protein>
    <recommendedName>
        <fullName evidence="1">RNA-binding protein Hfq</fullName>
    </recommendedName>
</protein>
<name>HFQ_BRUME</name>
<reference key="1">
    <citation type="journal article" date="2002" name="Proc. Natl. Acad. Sci. U.S.A.">
        <title>The genome sequence of the facultative intracellular pathogen Brucella melitensis.</title>
        <authorList>
            <person name="DelVecchio V.G."/>
            <person name="Kapatral V."/>
            <person name="Redkar R.J."/>
            <person name="Patra G."/>
            <person name="Mujer C."/>
            <person name="Los T."/>
            <person name="Ivanova N."/>
            <person name="Anderson I."/>
            <person name="Bhattacharyya A."/>
            <person name="Lykidis A."/>
            <person name="Reznik G."/>
            <person name="Jablonski L."/>
            <person name="Larsen N."/>
            <person name="D'Souza M."/>
            <person name="Bernal A."/>
            <person name="Mazur M."/>
            <person name="Goltsman E."/>
            <person name="Selkov E."/>
            <person name="Elzer P.H."/>
            <person name="Hagius S."/>
            <person name="O'Callaghan D."/>
            <person name="Letesson J.-J."/>
            <person name="Haselkorn R."/>
            <person name="Kyrpides N.C."/>
            <person name="Overbeek R."/>
        </authorList>
    </citation>
    <scope>NUCLEOTIDE SEQUENCE [LARGE SCALE GENOMIC DNA]</scope>
    <source>
        <strain>ATCC 23456 / CCUG 17765 / NCTC 10094 / 16M</strain>
    </source>
</reference>